<comment type="function">
    <text evidence="1">Together with its co-chaperonin GroES, plays an essential role in assisting protein folding. The GroEL-GroES system forms a nano-cage that allows encapsulation of the non-native substrate proteins and provides a physical environment optimized to promote and accelerate protein folding.</text>
</comment>
<comment type="catalytic activity">
    <reaction evidence="1">
        <text>ATP + H2O + a folded polypeptide = ADP + phosphate + an unfolded polypeptide.</text>
        <dbReference type="EC" id="5.6.1.7"/>
    </reaction>
</comment>
<comment type="subunit">
    <text evidence="1">Forms a cylinder of 14 subunits composed of two heptameric rings stacked back-to-back. Interacts with the co-chaperonin GroES.</text>
</comment>
<comment type="subcellular location">
    <subcellularLocation>
        <location evidence="1">Cytoplasm</location>
    </subcellularLocation>
</comment>
<comment type="similarity">
    <text evidence="1">Belongs to the chaperonin (HSP60) family.</text>
</comment>
<reference key="1">
    <citation type="journal article" date="2009" name="Stand. Genomic Sci.">
        <title>Complete genome sequence of Beutenbergia cavernae type strain (HKI 0122).</title>
        <authorList>
            <person name="Land M."/>
            <person name="Pukall R."/>
            <person name="Abt B."/>
            <person name="Goker M."/>
            <person name="Rohde M."/>
            <person name="Glavina Del Rio T."/>
            <person name="Tice H."/>
            <person name="Copeland A."/>
            <person name="Cheng J.F."/>
            <person name="Lucas S."/>
            <person name="Chen F."/>
            <person name="Nolan M."/>
            <person name="Bruce D."/>
            <person name="Goodwin L."/>
            <person name="Pitluck S."/>
            <person name="Ivanova N."/>
            <person name="Mavromatis K."/>
            <person name="Ovchinnikova G."/>
            <person name="Pati A."/>
            <person name="Chen A."/>
            <person name="Palaniappan K."/>
            <person name="Hauser L."/>
            <person name="Chang Y.J."/>
            <person name="Jefferies C.C."/>
            <person name="Saunders E."/>
            <person name="Brettin T."/>
            <person name="Detter J.C."/>
            <person name="Han C."/>
            <person name="Chain P."/>
            <person name="Bristow J."/>
            <person name="Eisen J.A."/>
            <person name="Markowitz V."/>
            <person name="Hugenholtz P."/>
            <person name="Kyrpides N.C."/>
            <person name="Klenk H.P."/>
            <person name="Lapidus A."/>
        </authorList>
    </citation>
    <scope>NUCLEOTIDE SEQUENCE [LARGE SCALE GENOMIC DNA]</scope>
    <source>
        <strain>ATCC BAA-8 / DSM 12333 / CCUG 43141 / JCM 11478 / NBRC 16432 / NCIMB 13614 / HKI 0122</strain>
    </source>
</reference>
<name>CH60_BEUC1</name>
<proteinExistence type="inferred from homology"/>
<feature type="chain" id="PRO_1000212191" description="Chaperonin GroEL">
    <location>
        <begin position="1"/>
        <end position="542"/>
    </location>
</feature>
<feature type="binding site" evidence="1">
    <location>
        <begin position="29"/>
        <end position="32"/>
    </location>
    <ligand>
        <name>ATP</name>
        <dbReference type="ChEBI" id="CHEBI:30616"/>
    </ligand>
</feature>
<feature type="binding site" evidence="1">
    <location>
        <begin position="86"/>
        <end position="90"/>
    </location>
    <ligand>
        <name>ATP</name>
        <dbReference type="ChEBI" id="CHEBI:30616"/>
    </ligand>
</feature>
<feature type="binding site" evidence="1">
    <location>
        <position position="413"/>
    </location>
    <ligand>
        <name>ATP</name>
        <dbReference type="ChEBI" id="CHEBI:30616"/>
    </ligand>
</feature>
<feature type="binding site" evidence="1">
    <location>
        <begin position="477"/>
        <end position="479"/>
    </location>
    <ligand>
        <name>ATP</name>
        <dbReference type="ChEBI" id="CHEBI:30616"/>
    </ligand>
</feature>
<feature type="binding site" evidence="1">
    <location>
        <position position="493"/>
    </location>
    <ligand>
        <name>ATP</name>
        <dbReference type="ChEBI" id="CHEBI:30616"/>
    </ligand>
</feature>
<evidence type="ECO:0000255" key="1">
    <source>
        <dbReference type="HAMAP-Rule" id="MF_00600"/>
    </source>
</evidence>
<gene>
    <name evidence="1" type="primary">groEL</name>
    <name evidence="1" type="synonym">groL</name>
    <name type="ordered locus">Bcav_0821</name>
</gene>
<accession>C5BZB0</accession>
<sequence>MAKIIAFEEEARRGMERGLNHLADAVKVTLGPKGRNVVLEKKWGAPTITNDGVSIAKEIELEEPFEKIGAELVKEVAKKTDDVAGDGTTTATVLAQALVREGLRNVAAGANPIALKKGIDKAVEAVTAALLEQAKEVETKEEIAATAGISAGDPAIGELIAEALDKVGKEGVITVEESNALGLELELTEGMRFDKGYLSAYFVTDQERQEAVLEDAYILLVESKISSVKDLLPLLEKVIQGGKSLVIIAEDIEGEALATLVVNKLKGTFKSVAVKAPGFGDRRKAMLQDMAILTGGQVISETVGLSLENADLDALGQARKIVVTKDETTIVEGAGDPDQLAGRVAQIRAEIENSDSDYDREKLQERLAKLAGGVAVIKAGAATEVELKERKHRIEDAVRNAKAAVEEGIVAGGGVALIQAGKVAFETLELVGDESTGGNIVKVAIDAPLKQIAINAGLEGGVVAEKVRSLPAGHGLNAATGDYEDLLAAGINDPVKVTRSALQNAASIAGLFLTTEAIVADKPEKASAPAGGGDGDMGGMGF</sequence>
<organism>
    <name type="scientific">Beutenbergia cavernae (strain ATCC BAA-8 / DSM 12333 / CCUG 43141 / JCM 11478 / NBRC 16432 / NCIMB 13614 / HKI 0122)</name>
    <dbReference type="NCBI Taxonomy" id="471853"/>
    <lineage>
        <taxon>Bacteria</taxon>
        <taxon>Bacillati</taxon>
        <taxon>Actinomycetota</taxon>
        <taxon>Actinomycetes</taxon>
        <taxon>Micrococcales</taxon>
        <taxon>Beutenbergiaceae</taxon>
        <taxon>Beutenbergia</taxon>
    </lineage>
</organism>
<keyword id="KW-0067">ATP-binding</keyword>
<keyword id="KW-0143">Chaperone</keyword>
<keyword id="KW-0963">Cytoplasm</keyword>
<keyword id="KW-0413">Isomerase</keyword>
<keyword id="KW-0547">Nucleotide-binding</keyword>
<keyword id="KW-1185">Reference proteome</keyword>
<dbReference type="EC" id="5.6.1.7" evidence="1"/>
<dbReference type="EMBL" id="CP001618">
    <property type="protein sequence ID" value="ACQ79082.1"/>
    <property type="molecule type" value="Genomic_DNA"/>
</dbReference>
<dbReference type="RefSeq" id="WP_012725862.1">
    <property type="nucleotide sequence ID" value="NC_012669.1"/>
</dbReference>
<dbReference type="SMR" id="C5BZB0"/>
<dbReference type="STRING" id="471853.Bcav_0821"/>
<dbReference type="KEGG" id="bcv:Bcav_0821"/>
<dbReference type="eggNOG" id="COG0459">
    <property type="taxonomic scope" value="Bacteria"/>
</dbReference>
<dbReference type="HOGENOM" id="CLU_016503_3_0_11"/>
<dbReference type="OrthoDB" id="9766614at2"/>
<dbReference type="Proteomes" id="UP000007962">
    <property type="component" value="Chromosome"/>
</dbReference>
<dbReference type="GO" id="GO:0005737">
    <property type="term" value="C:cytoplasm"/>
    <property type="evidence" value="ECO:0007669"/>
    <property type="project" value="UniProtKB-SubCell"/>
</dbReference>
<dbReference type="GO" id="GO:0005524">
    <property type="term" value="F:ATP binding"/>
    <property type="evidence" value="ECO:0007669"/>
    <property type="project" value="UniProtKB-UniRule"/>
</dbReference>
<dbReference type="GO" id="GO:0140662">
    <property type="term" value="F:ATP-dependent protein folding chaperone"/>
    <property type="evidence" value="ECO:0007669"/>
    <property type="project" value="InterPro"/>
</dbReference>
<dbReference type="GO" id="GO:0016853">
    <property type="term" value="F:isomerase activity"/>
    <property type="evidence" value="ECO:0007669"/>
    <property type="project" value="UniProtKB-KW"/>
</dbReference>
<dbReference type="GO" id="GO:0051082">
    <property type="term" value="F:unfolded protein binding"/>
    <property type="evidence" value="ECO:0007669"/>
    <property type="project" value="UniProtKB-UniRule"/>
</dbReference>
<dbReference type="GO" id="GO:0042026">
    <property type="term" value="P:protein refolding"/>
    <property type="evidence" value="ECO:0007669"/>
    <property type="project" value="UniProtKB-UniRule"/>
</dbReference>
<dbReference type="CDD" id="cd03344">
    <property type="entry name" value="GroEL"/>
    <property type="match status" value="1"/>
</dbReference>
<dbReference type="FunFam" id="3.50.7.10:FF:000001">
    <property type="entry name" value="60 kDa chaperonin"/>
    <property type="match status" value="1"/>
</dbReference>
<dbReference type="Gene3D" id="3.50.7.10">
    <property type="entry name" value="GroEL"/>
    <property type="match status" value="1"/>
</dbReference>
<dbReference type="Gene3D" id="1.10.560.10">
    <property type="entry name" value="GroEL-like equatorial domain"/>
    <property type="match status" value="1"/>
</dbReference>
<dbReference type="Gene3D" id="3.30.260.10">
    <property type="entry name" value="TCP-1-like chaperonin intermediate domain"/>
    <property type="match status" value="1"/>
</dbReference>
<dbReference type="HAMAP" id="MF_00600">
    <property type="entry name" value="CH60"/>
    <property type="match status" value="1"/>
</dbReference>
<dbReference type="InterPro" id="IPR018370">
    <property type="entry name" value="Chaperonin_Cpn60_CS"/>
</dbReference>
<dbReference type="InterPro" id="IPR001844">
    <property type="entry name" value="Cpn60/GroEL"/>
</dbReference>
<dbReference type="InterPro" id="IPR002423">
    <property type="entry name" value="Cpn60/GroEL/TCP-1"/>
</dbReference>
<dbReference type="InterPro" id="IPR027409">
    <property type="entry name" value="GroEL-like_apical_dom_sf"/>
</dbReference>
<dbReference type="InterPro" id="IPR027413">
    <property type="entry name" value="GROEL-like_equatorial_sf"/>
</dbReference>
<dbReference type="InterPro" id="IPR027410">
    <property type="entry name" value="TCP-1-like_intermed_sf"/>
</dbReference>
<dbReference type="NCBIfam" id="TIGR02348">
    <property type="entry name" value="GroEL"/>
    <property type="match status" value="1"/>
</dbReference>
<dbReference type="NCBIfam" id="NF000592">
    <property type="entry name" value="PRK00013.1"/>
    <property type="match status" value="1"/>
</dbReference>
<dbReference type="NCBIfam" id="NF009487">
    <property type="entry name" value="PRK12849.1"/>
    <property type="match status" value="1"/>
</dbReference>
<dbReference type="NCBIfam" id="NF009488">
    <property type="entry name" value="PRK12850.1"/>
    <property type="match status" value="1"/>
</dbReference>
<dbReference type="NCBIfam" id="NF009489">
    <property type="entry name" value="PRK12851.1"/>
    <property type="match status" value="1"/>
</dbReference>
<dbReference type="PANTHER" id="PTHR45633">
    <property type="entry name" value="60 KDA HEAT SHOCK PROTEIN, MITOCHONDRIAL"/>
    <property type="match status" value="1"/>
</dbReference>
<dbReference type="Pfam" id="PF00118">
    <property type="entry name" value="Cpn60_TCP1"/>
    <property type="match status" value="1"/>
</dbReference>
<dbReference type="PRINTS" id="PR00298">
    <property type="entry name" value="CHAPERONIN60"/>
</dbReference>
<dbReference type="SUPFAM" id="SSF52029">
    <property type="entry name" value="GroEL apical domain-like"/>
    <property type="match status" value="1"/>
</dbReference>
<dbReference type="SUPFAM" id="SSF48592">
    <property type="entry name" value="GroEL equatorial domain-like"/>
    <property type="match status" value="1"/>
</dbReference>
<dbReference type="SUPFAM" id="SSF54849">
    <property type="entry name" value="GroEL-intermediate domain like"/>
    <property type="match status" value="1"/>
</dbReference>
<dbReference type="PROSITE" id="PS00296">
    <property type="entry name" value="CHAPERONINS_CPN60"/>
    <property type="match status" value="1"/>
</dbReference>
<protein>
    <recommendedName>
        <fullName evidence="1">Chaperonin GroEL</fullName>
        <ecNumber evidence="1">5.6.1.7</ecNumber>
    </recommendedName>
    <alternativeName>
        <fullName evidence="1">60 kDa chaperonin</fullName>
    </alternativeName>
    <alternativeName>
        <fullName evidence="1">Chaperonin-60</fullName>
        <shortName evidence="1">Cpn60</shortName>
    </alternativeName>
</protein>